<comment type="similarity">
    <text evidence="1">Belongs to the UPF0253 family.</text>
</comment>
<gene>
    <name evidence="1" type="primary">yaeP</name>
    <name type="ordered locus">ECIAI1_0190</name>
</gene>
<proteinExistence type="inferred from homology"/>
<reference key="1">
    <citation type="journal article" date="2009" name="PLoS Genet.">
        <title>Organised genome dynamics in the Escherichia coli species results in highly diverse adaptive paths.</title>
        <authorList>
            <person name="Touchon M."/>
            <person name="Hoede C."/>
            <person name="Tenaillon O."/>
            <person name="Barbe V."/>
            <person name="Baeriswyl S."/>
            <person name="Bidet P."/>
            <person name="Bingen E."/>
            <person name="Bonacorsi S."/>
            <person name="Bouchier C."/>
            <person name="Bouvet O."/>
            <person name="Calteau A."/>
            <person name="Chiapello H."/>
            <person name="Clermont O."/>
            <person name="Cruveiller S."/>
            <person name="Danchin A."/>
            <person name="Diard M."/>
            <person name="Dossat C."/>
            <person name="Karoui M.E."/>
            <person name="Frapy E."/>
            <person name="Garry L."/>
            <person name="Ghigo J.M."/>
            <person name="Gilles A.M."/>
            <person name="Johnson J."/>
            <person name="Le Bouguenec C."/>
            <person name="Lescat M."/>
            <person name="Mangenot S."/>
            <person name="Martinez-Jehanne V."/>
            <person name="Matic I."/>
            <person name="Nassif X."/>
            <person name="Oztas S."/>
            <person name="Petit M.A."/>
            <person name="Pichon C."/>
            <person name="Rouy Z."/>
            <person name="Ruf C.S."/>
            <person name="Schneider D."/>
            <person name="Tourret J."/>
            <person name="Vacherie B."/>
            <person name="Vallenet D."/>
            <person name="Medigue C."/>
            <person name="Rocha E.P.C."/>
            <person name="Denamur E."/>
        </authorList>
    </citation>
    <scope>NUCLEOTIDE SEQUENCE [LARGE SCALE GENOMIC DNA]</scope>
    <source>
        <strain>IAI1</strain>
    </source>
</reference>
<feature type="chain" id="PRO_1000136535" description="UPF0253 protein YaeP">
    <location>
        <begin position="1"/>
        <end position="66"/>
    </location>
</feature>
<protein>
    <recommendedName>
        <fullName evidence="1">UPF0253 protein YaeP</fullName>
    </recommendedName>
</protein>
<dbReference type="EMBL" id="CU928160">
    <property type="protein sequence ID" value="CAQ97077.1"/>
    <property type="molecule type" value="Genomic_DNA"/>
</dbReference>
<dbReference type="RefSeq" id="WP_000417058.1">
    <property type="nucleotide sequence ID" value="NC_011741.1"/>
</dbReference>
<dbReference type="SMR" id="B7M1Z3"/>
<dbReference type="KEGG" id="ecr:ECIAI1_0190"/>
<dbReference type="HOGENOM" id="CLU_190008_0_0_6"/>
<dbReference type="HAMAP" id="MF_01064">
    <property type="entry name" value="UPF0253"/>
    <property type="match status" value="1"/>
</dbReference>
<dbReference type="InterPro" id="IPR009624">
    <property type="entry name" value="UPF0253"/>
</dbReference>
<dbReference type="NCBIfam" id="NF003436">
    <property type="entry name" value="PRK04964.1"/>
    <property type="match status" value="1"/>
</dbReference>
<dbReference type="Pfam" id="PF06786">
    <property type="entry name" value="UPF0253"/>
    <property type="match status" value="1"/>
</dbReference>
<evidence type="ECO:0000255" key="1">
    <source>
        <dbReference type="HAMAP-Rule" id="MF_01064"/>
    </source>
</evidence>
<sequence length="66" mass="7214">MEKYCELIRKRYAEIASGDLGYVPDALGCVLKVLNEMAADDALSEAVREKAAYAAANLLVSDYVNE</sequence>
<organism>
    <name type="scientific">Escherichia coli O8 (strain IAI1)</name>
    <dbReference type="NCBI Taxonomy" id="585034"/>
    <lineage>
        <taxon>Bacteria</taxon>
        <taxon>Pseudomonadati</taxon>
        <taxon>Pseudomonadota</taxon>
        <taxon>Gammaproteobacteria</taxon>
        <taxon>Enterobacterales</taxon>
        <taxon>Enterobacteriaceae</taxon>
        <taxon>Escherichia</taxon>
    </lineage>
</organism>
<accession>B7M1Z3</accession>
<name>YAEP_ECO8A</name>